<name>FDTC_ANETH</name>
<organism>
    <name type="scientific">Aneurinibacillus thermoaerophilus</name>
    <dbReference type="NCBI Taxonomy" id="143495"/>
    <lineage>
        <taxon>Bacteria</taxon>
        <taxon>Bacillati</taxon>
        <taxon>Bacillota</taxon>
        <taxon>Bacilli</taxon>
        <taxon>Bacillales</taxon>
        <taxon>Paenibacillaceae</taxon>
        <taxon>Aneurinibacillus group</taxon>
        <taxon>Aneurinibacillus</taxon>
    </lineage>
</organism>
<protein>
    <recommendedName>
        <fullName>dTDP-3-amino-3,6-dideoxy-alpha-D-galactopyranose 3-N-acetyltransferase</fullName>
        <ecNumber>2.3.1.197</ecNumber>
    </recommendedName>
    <alternativeName>
        <fullName>dTDP-D-Fucp3N acetylase</fullName>
    </alternativeName>
</protein>
<gene>
    <name type="primary">fdtC</name>
</gene>
<dbReference type="EC" id="2.3.1.197"/>
<dbReference type="EMBL" id="AY442352">
    <property type="protein sequence ID" value="AAS55721.1"/>
    <property type="molecule type" value="Genomic_DNA"/>
</dbReference>
<dbReference type="RefSeq" id="WP_175493639.1">
    <property type="nucleotide sequence ID" value="NZ_FNDE01000034.1"/>
</dbReference>
<dbReference type="SMR" id="Q6T1W7"/>
<dbReference type="KEGG" id="ag:AAS55721"/>
<dbReference type="BioCyc" id="MetaCyc:MONOMER-17006"/>
<dbReference type="BRENDA" id="2.3.1.197">
    <property type="organism ID" value="344"/>
</dbReference>
<dbReference type="GO" id="GO:0016740">
    <property type="term" value="F:transferase activity"/>
    <property type="evidence" value="ECO:0007669"/>
    <property type="project" value="UniProtKB-KW"/>
</dbReference>
<dbReference type="CDD" id="cd03358">
    <property type="entry name" value="LbH_WxcM_N_like"/>
    <property type="match status" value="1"/>
</dbReference>
<dbReference type="Gene3D" id="2.160.10.10">
    <property type="entry name" value="Hexapeptide repeat proteins"/>
    <property type="match status" value="1"/>
</dbReference>
<dbReference type="InterPro" id="IPR001451">
    <property type="entry name" value="Hexapep"/>
</dbReference>
<dbReference type="InterPro" id="IPR050179">
    <property type="entry name" value="Trans_hexapeptide_repeat"/>
</dbReference>
<dbReference type="InterPro" id="IPR011004">
    <property type="entry name" value="Trimer_LpxA-like_sf"/>
</dbReference>
<dbReference type="PANTHER" id="PTHR43300">
    <property type="entry name" value="ACETYLTRANSFERASE"/>
    <property type="match status" value="1"/>
</dbReference>
<dbReference type="PANTHER" id="PTHR43300:SF4">
    <property type="entry name" value="ACYL-[ACYL-CARRIER-PROTEIN]--UDP-N-ACETYLGLUCOSAMINE O-ACYLTRANSFERASE"/>
    <property type="match status" value="1"/>
</dbReference>
<dbReference type="Pfam" id="PF00132">
    <property type="entry name" value="Hexapep"/>
    <property type="match status" value="2"/>
</dbReference>
<dbReference type="Pfam" id="PF14602">
    <property type="entry name" value="Hexapep_2"/>
    <property type="match status" value="1"/>
</dbReference>
<dbReference type="SUPFAM" id="SSF51161">
    <property type="entry name" value="Trimeric LpxA-like enzymes"/>
    <property type="match status" value="1"/>
</dbReference>
<keyword id="KW-0808">Transferase</keyword>
<proteinExistence type="evidence at protein level"/>
<feature type="chain" id="PRO_0000421825" description="dTDP-3-amino-3,6-dideoxy-alpha-D-galactopyranose 3-N-acetyltransferase">
    <location>
        <begin position="1"/>
        <end position="192"/>
    </location>
</feature>
<comment type="function">
    <text evidence="1">Catalyzes the transfer of an acetyl group to dTDP-D-Fucp3N to form dTDP-D-Fucp3NAc in the biosynthesis of dTDP-3-acetamido-3,6-dideoxy-alpha-D-galactose, a glycan chain of the S-layer.</text>
</comment>
<comment type="catalytic activity">
    <reaction evidence="1">
        <text>dTDP-3-amino-3,6-dideoxy-alpha-D-galactopyranose + acetyl-CoA = dTDP-3-acetamido-3,6-dideoxy-alpha-D-galactopyranose + CoA + H(+)</text>
        <dbReference type="Rhea" id="RHEA:32095"/>
        <dbReference type="ChEBI" id="CHEBI:15378"/>
        <dbReference type="ChEBI" id="CHEBI:57287"/>
        <dbReference type="ChEBI" id="CHEBI:57288"/>
        <dbReference type="ChEBI" id="CHEBI:63305"/>
        <dbReference type="ChEBI" id="CHEBI:63676"/>
        <dbReference type="EC" id="2.3.1.197"/>
    </reaction>
</comment>
<comment type="biophysicochemical properties">
    <kinetics>
        <KM evidence="1">66.7 uM for dTDP-D-Fucp3N</KM>
        <KM evidence="1">61 uM for acetyl-CoA</KM>
        <text>kcat is 2.3 sec(-1) with dTDP-D-Fucp3N as substrate. kcat is 3.1 sec(-1) with acetyl-CoA as substrate.</text>
    </kinetics>
</comment>
<comment type="similarity">
    <text evidence="2">Belongs to the transferase hexapeptide repeat family.</text>
</comment>
<accession>Q6T1W7</accession>
<evidence type="ECO:0000269" key="1">
    <source>
    </source>
</evidence>
<evidence type="ECO:0000305" key="2"/>
<sequence length="192" mass="21003">MSSSSETCFVHPNAIVETKKIGNNTRIWAFVHILPQAMIGDNCNICDHCFIENDVFIGNNVTVKSGIYIWDGVYIEDNVFLGPNVVFTNDVFPRSKVYPESFGRTIVKKGASIGANSVIVAGNIIGEYAMVGAGSVVTRDIPDYALAYGNPARIKGYVCQCTSKLKFIDNQAVCQCGKRYKYADGIVSQLII</sequence>
<reference key="1">
    <citation type="journal article" date="2003" name="J. Biol. Chem.">
        <title>Biosynthesis of dTDP-3-acetamido-3,6-dideoxy-alpha-D-galactose in Aneurinibacillus thermoaerophilus L420-91T.</title>
        <authorList>
            <person name="Pfoestl A."/>
            <person name="Hofinger A."/>
            <person name="Kosma P."/>
            <person name="Messner P."/>
        </authorList>
    </citation>
    <scope>NUCLEOTIDE SEQUENCE [GENOMIC DNA]</scope>
    <scope>FUNCTION</scope>
    <scope>CATALYTIC ACTIVITY</scope>
    <scope>BIOPHYSICOCHEMICAL PROPERTIES</scope>
    <source>
        <strain>L420-91T</strain>
    </source>
</reference>